<gene>
    <name evidence="1" type="primary">prs</name>
</gene>
<keyword id="KW-0067">ATP-binding</keyword>
<keyword id="KW-0963">Cytoplasm</keyword>
<keyword id="KW-0418">Kinase</keyword>
<keyword id="KW-0460">Magnesium</keyword>
<keyword id="KW-0479">Metal-binding</keyword>
<keyword id="KW-0545">Nucleotide biosynthesis</keyword>
<keyword id="KW-0547">Nucleotide-binding</keyword>
<keyword id="KW-0808">Transferase</keyword>
<accession>O33924</accession>
<protein>
    <recommendedName>
        <fullName evidence="1">Ribose-phosphate pyrophosphokinase</fullName>
        <shortName evidence="1">RPPK</shortName>
        <ecNumber evidence="1">2.7.6.1</ecNumber>
    </recommendedName>
    <alternativeName>
        <fullName evidence="1">5-phospho-D-ribosyl alpha-1-diphosphate synthase</fullName>
    </alternativeName>
    <alternativeName>
        <fullName evidence="1">Phosphoribosyl diphosphate synthase</fullName>
    </alternativeName>
    <alternativeName>
        <fullName evidence="1">Phosphoribosyl pyrophosphate synthase</fullName>
        <shortName evidence="1">P-Rib-PP synthase</shortName>
        <shortName evidence="1">PRPP synthase</shortName>
        <shortName evidence="1">PRPPase</shortName>
    </alternativeName>
</protein>
<feature type="chain" id="PRO_0000141129" description="Ribose-phosphate pyrophosphokinase">
    <location>
        <begin position="1"/>
        <end position="317"/>
    </location>
</feature>
<feature type="active site" evidence="1">
    <location>
        <position position="198"/>
    </location>
</feature>
<feature type="binding site" evidence="1">
    <location>
        <begin position="43"/>
        <end position="45"/>
    </location>
    <ligand>
        <name>ATP</name>
        <dbReference type="ChEBI" id="CHEBI:30616"/>
    </ligand>
</feature>
<feature type="binding site" evidence="1">
    <location>
        <begin position="102"/>
        <end position="103"/>
    </location>
    <ligand>
        <name>ATP</name>
        <dbReference type="ChEBI" id="CHEBI:30616"/>
    </ligand>
</feature>
<feature type="binding site" evidence="1">
    <location>
        <position position="136"/>
    </location>
    <ligand>
        <name>Mg(2+)</name>
        <dbReference type="ChEBI" id="CHEBI:18420"/>
        <label>1</label>
    </ligand>
</feature>
<feature type="binding site" evidence="1">
    <location>
        <position position="175"/>
    </location>
    <ligand>
        <name>Mg(2+)</name>
        <dbReference type="ChEBI" id="CHEBI:18420"/>
        <label>2</label>
    </ligand>
</feature>
<feature type="binding site" evidence="1">
    <location>
        <position position="200"/>
    </location>
    <ligand>
        <name>D-ribose 5-phosphate</name>
        <dbReference type="ChEBI" id="CHEBI:78346"/>
    </ligand>
</feature>
<feature type="binding site" evidence="1">
    <location>
        <position position="224"/>
    </location>
    <ligand>
        <name>D-ribose 5-phosphate</name>
        <dbReference type="ChEBI" id="CHEBI:78346"/>
    </ligand>
</feature>
<feature type="binding site" evidence="1">
    <location>
        <begin position="228"/>
        <end position="232"/>
    </location>
    <ligand>
        <name>D-ribose 5-phosphate</name>
        <dbReference type="ChEBI" id="CHEBI:78346"/>
    </ligand>
</feature>
<sequence>MSTQYLNSNLKVFSLNSNKELAEQIAKHIGVGLGKCSVDRFSDGEVQINIEESIRGCDVFIIQSTSFPVNEHIMELLIMIDALKRASAKTINIVIPYYGYARQDRKARSREPITSKLVANLLETAGATRVITLDLHAPQIQGFFDIPIDHLMGVPILSDYFETKGLKDIVIVSPDHGGVTRARKMADRLKAPIAIIDKRRPRPNVSEVMNIIGNIEGKTALLIDDIIDTAGTITLAANALVENGASEVYACCTHPVLSGPAIERIQNSNIKELVVTNSIVLPEEKKIDKVHELSVAPLIGEAIIRVYEEESVSVLFN</sequence>
<comment type="function">
    <text evidence="1">Involved in the biosynthesis of the central metabolite phospho-alpha-D-ribosyl-1-pyrophosphate (PRPP) via the transfer of pyrophosphoryl group from ATP to 1-hydroxyl of ribose-5-phosphate (Rib-5-P).</text>
</comment>
<comment type="catalytic activity">
    <reaction evidence="1">
        <text>D-ribose 5-phosphate + ATP = 5-phospho-alpha-D-ribose 1-diphosphate + AMP + H(+)</text>
        <dbReference type="Rhea" id="RHEA:15609"/>
        <dbReference type="ChEBI" id="CHEBI:15378"/>
        <dbReference type="ChEBI" id="CHEBI:30616"/>
        <dbReference type="ChEBI" id="CHEBI:58017"/>
        <dbReference type="ChEBI" id="CHEBI:78346"/>
        <dbReference type="ChEBI" id="CHEBI:456215"/>
        <dbReference type="EC" id="2.7.6.1"/>
    </reaction>
</comment>
<comment type="cofactor">
    <cofactor evidence="1">
        <name>Mg(2+)</name>
        <dbReference type="ChEBI" id="CHEBI:18420"/>
    </cofactor>
    <text evidence="1">Binds 2 Mg(2+) ions per subunit.</text>
</comment>
<comment type="pathway">
    <text evidence="1">Metabolic intermediate biosynthesis; 5-phospho-alpha-D-ribose 1-diphosphate biosynthesis; 5-phospho-alpha-D-ribose 1-diphosphate from D-ribose 5-phosphate (route I): step 1/1.</text>
</comment>
<comment type="subunit">
    <text evidence="1">Homohexamer.</text>
</comment>
<comment type="subcellular location">
    <subcellularLocation>
        <location evidence="1">Cytoplasm</location>
    </subcellularLocation>
</comment>
<comment type="similarity">
    <text evidence="1">Belongs to the ribose-phosphate pyrophosphokinase family. Class I subfamily.</text>
</comment>
<reference key="1">
    <citation type="submission" date="1996-10" db="EMBL/GenBank/DDBJ databases">
        <title>Cloning and expression of the gene encoding phosphoribosylpyrophosphate synthetase from Brevibacterium ammoniagenes KCTC1019.</title>
        <authorList>
            <person name="Kim M.K."/>
            <person name="Park B.C."/>
            <person name="Park J.H."/>
            <person name="Lim B.L."/>
            <person name="Lee D.-S."/>
        </authorList>
    </citation>
    <scope>NUCLEOTIDE SEQUENCE [GENOMIC DNA]</scope>
    <source>
        <strain>ATCC 6872 / DSM 20305 / IAM 1645 / KCTC 1019 / NCTC 2399</strain>
    </source>
</reference>
<organism>
    <name type="scientific">Corynebacterium ammoniagenes</name>
    <name type="common">Brevibacterium ammoniagenes</name>
    <dbReference type="NCBI Taxonomy" id="1697"/>
    <lineage>
        <taxon>Bacteria</taxon>
        <taxon>Bacillati</taxon>
        <taxon>Actinomycetota</taxon>
        <taxon>Actinomycetes</taxon>
        <taxon>Mycobacteriales</taxon>
        <taxon>Corynebacteriaceae</taxon>
        <taxon>Corynebacterium</taxon>
    </lineage>
</organism>
<evidence type="ECO:0000255" key="1">
    <source>
        <dbReference type="HAMAP-Rule" id="MF_00583"/>
    </source>
</evidence>
<proteinExistence type="inferred from homology"/>
<dbReference type="EC" id="2.7.6.1" evidence="1"/>
<dbReference type="EMBL" id="U76387">
    <property type="protein sequence ID" value="AAB64352.1"/>
    <property type="molecule type" value="Genomic_DNA"/>
</dbReference>
<dbReference type="SMR" id="O33924"/>
<dbReference type="UniPathway" id="UPA00087">
    <property type="reaction ID" value="UER00172"/>
</dbReference>
<dbReference type="GO" id="GO:0005737">
    <property type="term" value="C:cytoplasm"/>
    <property type="evidence" value="ECO:0007669"/>
    <property type="project" value="UniProtKB-SubCell"/>
</dbReference>
<dbReference type="GO" id="GO:0002189">
    <property type="term" value="C:ribose phosphate diphosphokinase complex"/>
    <property type="evidence" value="ECO:0007669"/>
    <property type="project" value="TreeGrafter"/>
</dbReference>
<dbReference type="GO" id="GO:0005524">
    <property type="term" value="F:ATP binding"/>
    <property type="evidence" value="ECO:0007669"/>
    <property type="project" value="UniProtKB-KW"/>
</dbReference>
<dbReference type="GO" id="GO:0016301">
    <property type="term" value="F:kinase activity"/>
    <property type="evidence" value="ECO:0007669"/>
    <property type="project" value="UniProtKB-KW"/>
</dbReference>
<dbReference type="GO" id="GO:0000287">
    <property type="term" value="F:magnesium ion binding"/>
    <property type="evidence" value="ECO:0007669"/>
    <property type="project" value="UniProtKB-UniRule"/>
</dbReference>
<dbReference type="GO" id="GO:0004749">
    <property type="term" value="F:ribose phosphate diphosphokinase activity"/>
    <property type="evidence" value="ECO:0007669"/>
    <property type="project" value="UniProtKB-UniRule"/>
</dbReference>
<dbReference type="GO" id="GO:0006015">
    <property type="term" value="P:5-phosphoribose 1-diphosphate biosynthetic process"/>
    <property type="evidence" value="ECO:0007669"/>
    <property type="project" value="UniProtKB-UniRule"/>
</dbReference>
<dbReference type="GO" id="GO:0006164">
    <property type="term" value="P:purine nucleotide biosynthetic process"/>
    <property type="evidence" value="ECO:0007669"/>
    <property type="project" value="TreeGrafter"/>
</dbReference>
<dbReference type="GO" id="GO:0009156">
    <property type="term" value="P:ribonucleoside monophosphate biosynthetic process"/>
    <property type="evidence" value="ECO:0007669"/>
    <property type="project" value="InterPro"/>
</dbReference>
<dbReference type="CDD" id="cd06223">
    <property type="entry name" value="PRTases_typeI"/>
    <property type="match status" value="1"/>
</dbReference>
<dbReference type="FunFam" id="3.40.50.2020:FF:000002">
    <property type="entry name" value="Ribose-phosphate pyrophosphokinase"/>
    <property type="match status" value="1"/>
</dbReference>
<dbReference type="FunFam" id="3.40.50.2020:FF:000014">
    <property type="entry name" value="Ribose-phosphate pyrophosphokinase 1"/>
    <property type="match status" value="1"/>
</dbReference>
<dbReference type="Gene3D" id="3.40.50.2020">
    <property type="match status" value="2"/>
</dbReference>
<dbReference type="HAMAP" id="MF_00583_B">
    <property type="entry name" value="RibP_PPkinase_B"/>
    <property type="match status" value="1"/>
</dbReference>
<dbReference type="InterPro" id="IPR000842">
    <property type="entry name" value="PRib_PP_synth_CS"/>
</dbReference>
<dbReference type="InterPro" id="IPR029099">
    <property type="entry name" value="Pribosyltran_N"/>
</dbReference>
<dbReference type="InterPro" id="IPR000836">
    <property type="entry name" value="PRibTrfase_dom"/>
</dbReference>
<dbReference type="InterPro" id="IPR029057">
    <property type="entry name" value="PRTase-like"/>
</dbReference>
<dbReference type="InterPro" id="IPR005946">
    <property type="entry name" value="Rib-P_diPkinase"/>
</dbReference>
<dbReference type="InterPro" id="IPR037515">
    <property type="entry name" value="Rib-P_diPkinase_bac"/>
</dbReference>
<dbReference type="NCBIfam" id="NF002320">
    <property type="entry name" value="PRK01259.1"/>
    <property type="match status" value="1"/>
</dbReference>
<dbReference type="NCBIfam" id="NF002618">
    <property type="entry name" value="PRK02269.1"/>
    <property type="match status" value="1"/>
</dbReference>
<dbReference type="NCBIfam" id="TIGR01251">
    <property type="entry name" value="ribP_PPkin"/>
    <property type="match status" value="1"/>
</dbReference>
<dbReference type="PANTHER" id="PTHR10210">
    <property type="entry name" value="RIBOSE-PHOSPHATE DIPHOSPHOKINASE FAMILY MEMBER"/>
    <property type="match status" value="1"/>
</dbReference>
<dbReference type="PANTHER" id="PTHR10210:SF41">
    <property type="entry name" value="RIBOSE-PHOSPHATE PYROPHOSPHOKINASE 1, CHLOROPLASTIC"/>
    <property type="match status" value="1"/>
</dbReference>
<dbReference type="Pfam" id="PF14572">
    <property type="entry name" value="Pribosyl_synth"/>
    <property type="match status" value="1"/>
</dbReference>
<dbReference type="Pfam" id="PF13793">
    <property type="entry name" value="Pribosyltran_N"/>
    <property type="match status" value="1"/>
</dbReference>
<dbReference type="SMART" id="SM01400">
    <property type="entry name" value="Pribosyltran_N"/>
    <property type="match status" value="1"/>
</dbReference>
<dbReference type="SUPFAM" id="SSF53271">
    <property type="entry name" value="PRTase-like"/>
    <property type="match status" value="1"/>
</dbReference>
<dbReference type="PROSITE" id="PS00114">
    <property type="entry name" value="PRPP_SYNTHASE"/>
    <property type="match status" value="1"/>
</dbReference>
<name>KPRS_CORAM</name>